<protein>
    <recommendedName>
        <fullName evidence="1">3-sulfolactaldehyde reductase</fullName>
        <shortName evidence="1">SLA reductase</shortName>
        <ecNumber evidence="1">1.1.1.373</ecNumber>
    </recommendedName>
</protein>
<gene>
    <name type="primary">yihU</name>
    <name type="ordered locus">SF3954</name>
    <name type="ordered locus">S3792</name>
</gene>
<dbReference type="EC" id="1.1.1.373" evidence="1"/>
<dbReference type="EMBL" id="AE005674">
    <property type="protein sequence ID" value="AAN45389.1"/>
    <property type="molecule type" value="Genomic_DNA"/>
</dbReference>
<dbReference type="EMBL" id="AE014073">
    <property type="protein sequence ID" value="AAP18811.1"/>
    <property type="molecule type" value="Genomic_DNA"/>
</dbReference>
<dbReference type="RefSeq" id="NP_709682.1">
    <property type="nucleotide sequence ID" value="NC_004337.2"/>
</dbReference>
<dbReference type="RefSeq" id="WP_000718893.1">
    <property type="nucleotide sequence ID" value="NZ_WPGW01000092.1"/>
</dbReference>
<dbReference type="SMR" id="P0A9V9"/>
<dbReference type="STRING" id="198214.SF3954"/>
<dbReference type="PaxDb" id="198214-SF3954"/>
<dbReference type="GeneID" id="1027487"/>
<dbReference type="GeneID" id="75204553"/>
<dbReference type="KEGG" id="sfl:SF3954"/>
<dbReference type="KEGG" id="sfx:S3792"/>
<dbReference type="PATRIC" id="fig|198214.7.peg.4659"/>
<dbReference type="HOGENOM" id="CLU_035117_1_1_6"/>
<dbReference type="Proteomes" id="UP000001006">
    <property type="component" value="Chromosome"/>
</dbReference>
<dbReference type="Proteomes" id="UP000002673">
    <property type="component" value="Chromosome"/>
</dbReference>
<dbReference type="GO" id="GO:0061596">
    <property type="term" value="F:3-sulfolactaldehyde reductase activity"/>
    <property type="evidence" value="ECO:0007669"/>
    <property type="project" value="UniProtKB-UniRule"/>
</dbReference>
<dbReference type="GO" id="GO:0051287">
    <property type="term" value="F:NAD binding"/>
    <property type="evidence" value="ECO:0007669"/>
    <property type="project" value="InterPro"/>
</dbReference>
<dbReference type="GO" id="GO:0050661">
    <property type="term" value="F:NADP binding"/>
    <property type="evidence" value="ECO:0007669"/>
    <property type="project" value="InterPro"/>
</dbReference>
<dbReference type="GO" id="GO:1902777">
    <property type="term" value="P:6-sulfoquinovose(1-) catabolic process"/>
    <property type="evidence" value="ECO:0007669"/>
    <property type="project" value="UniProtKB-UniRule"/>
</dbReference>
<dbReference type="FunFam" id="1.10.1040.10:FF:000022">
    <property type="entry name" value="3-sulfolactaldehyde reductase"/>
    <property type="match status" value="1"/>
</dbReference>
<dbReference type="FunFam" id="3.40.50.720:FF:000352">
    <property type="entry name" value="3-sulfolactaldehyde reductase"/>
    <property type="match status" value="1"/>
</dbReference>
<dbReference type="Gene3D" id="1.10.1040.10">
    <property type="entry name" value="N-(1-d-carboxylethyl)-l-norvaline Dehydrogenase, domain 2"/>
    <property type="match status" value="1"/>
</dbReference>
<dbReference type="Gene3D" id="3.40.50.720">
    <property type="entry name" value="NAD(P)-binding Rossmann-like Domain"/>
    <property type="match status" value="1"/>
</dbReference>
<dbReference type="HAMAP" id="MF_01913">
    <property type="entry name" value="SLA_reductase"/>
    <property type="match status" value="1"/>
</dbReference>
<dbReference type="InterPro" id="IPR002204">
    <property type="entry name" value="3-OH-isobutyrate_DH-rel_CS"/>
</dbReference>
<dbReference type="InterPro" id="IPR008927">
    <property type="entry name" value="6-PGluconate_DH-like_C_sf"/>
</dbReference>
<dbReference type="InterPro" id="IPR013328">
    <property type="entry name" value="6PGD_dom2"/>
</dbReference>
<dbReference type="InterPro" id="IPR006115">
    <property type="entry name" value="6PGDH_NADP-bd"/>
</dbReference>
<dbReference type="InterPro" id="IPR029154">
    <property type="entry name" value="HIBADH-like_NADP-bd"/>
</dbReference>
<dbReference type="InterPro" id="IPR015815">
    <property type="entry name" value="HIBADH-related"/>
</dbReference>
<dbReference type="InterPro" id="IPR036291">
    <property type="entry name" value="NAD(P)-bd_dom_sf"/>
</dbReference>
<dbReference type="InterPro" id="IPR030876">
    <property type="entry name" value="SLA_reductase"/>
</dbReference>
<dbReference type="NCBIfam" id="NF012005">
    <property type="entry name" value="PRK15461.1"/>
    <property type="match status" value="1"/>
</dbReference>
<dbReference type="PANTHER" id="PTHR22981:SF7">
    <property type="entry name" value="3-HYDROXYISOBUTYRATE DEHYDROGENASE, MITOCHONDRIAL"/>
    <property type="match status" value="1"/>
</dbReference>
<dbReference type="PANTHER" id="PTHR22981">
    <property type="entry name" value="3-HYDROXYISOBUTYRATE DEHYDROGENASE-RELATED"/>
    <property type="match status" value="1"/>
</dbReference>
<dbReference type="Pfam" id="PF14833">
    <property type="entry name" value="NAD_binding_11"/>
    <property type="match status" value="1"/>
</dbReference>
<dbReference type="Pfam" id="PF03446">
    <property type="entry name" value="NAD_binding_2"/>
    <property type="match status" value="1"/>
</dbReference>
<dbReference type="PIRSF" id="PIRSF000103">
    <property type="entry name" value="HIBADH"/>
    <property type="match status" value="1"/>
</dbReference>
<dbReference type="SUPFAM" id="SSF48179">
    <property type="entry name" value="6-phosphogluconate dehydrogenase C-terminal domain-like"/>
    <property type="match status" value="1"/>
</dbReference>
<dbReference type="SUPFAM" id="SSF51735">
    <property type="entry name" value="NAD(P)-binding Rossmann-fold domains"/>
    <property type="match status" value="1"/>
</dbReference>
<dbReference type="PROSITE" id="PS00895">
    <property type="entry name" value="3_HYDROXYISOBUT_DH"/>
    <property type="match status" value="1"/>
</dbReference>
<comment type="function">
    <text evidence="1">Reduces 3-sulfolactaldehyde (SLA) to 2,3-dihydroxypropane 1-sulfonate (DHPS).</text>
</comment>
<comment type="catalytic activity">
    <reaction evidence="1">
        <text>(2S)-3-sulfopropanediol + NAD(+) = (2S)-3-sulfolactaldehyde + NADH + H(+)</text>
        <dbReference type="Rhea" id="RHEA:40511"/>
        <dbReference type="ChEBI" id="CHEBI:15378"/>
        <dbReference type="ChEBI" id="CHEBI:57540"/>
        <dbReference type="ChEBI" id="CHEBI:57945"/>
        <dbReference type="ChEBI" id="CHEBI:90109"/>
        <dbReference type="ChEBI" id="CHEBI:176527"/>
        <dbReference type="EC" id="1.1.1.373"/>
    </reaction>
    <physiologicalReaction direction="right-to-left" evidence="1">
        <dbReference type="Rhea" id="RHEA:40513"/>
    </physiologicalReaction>
</comment>
<comment type="similarity">
    <text evidence="1">Belongs to the HIBADH-related family. 3-sulfolactaldehyde reductase subfamily.</text>
</comment>
<accession>P0A9V9</accession>
<accession>P32142</accession>
<feature type="chain" id="PRO_0000173066" description="3-sulfolactaldehyde reductase">
    <location>
        <begin position="1"/>
        <end position="298"/>
    </location>
</feature>
<feature type="active site" evidence="1">
    <location>
        <position position="171"/>
    </location>
</feature>
<feature type="binding site" evidence="1">
    <location>
        <begin position="11"/>
        <end position="12"/>
    </location>
    <ligand>
        <name>NAD(+)</name>
        <dbReference type="ChEBI" id="CHEBI:57540"/>
    </ligand>
</feature>
<feature type="binding site" evidence="1">
    <location>
        <position position="31"/>
    </location>
    <ligand>
        <name>NAD(+)</name>
        <dbReference type="ChEBI" id="CHEBI:57540"/>
    </ligand>
</feature>
<feature type="binding site" evidence="1">
    <location>
        <position position="65"/>
    </location>
    <ligand>
        <name>NAD(+)</name>
        <dbReference type="ChEBI" id="CHEBI:57540"/>
    </ligand>
</feature>
<feature type="binding site" evidence="1">
    <location>
        <position position="96"/>
    </location>
    <ligand>
        <name>NAD(+)</name>
        <dbReference type="ChEBI" id="CHEBI:57540"/>
    </ligand>
</feature>
<feature type="binding site" evidence="1">
    <location>
        <position position="123"/>
    </location>
    <ligand>
        <name>2,3-dihydroxypropane-1-sulfonate</name>
        <dbReference type="ChEBI" id="CHEBI:77138"/>
    </ligand>
</feature>
<feature type="binding site" evidence="1">
    <location>
        <begin position="174"/>
        <end position="178"/>
    </location>
    <ligand>
        <name>2,3-dihydroxypropane-1-sulfonate</name>
        <dbReference type="ChEBI" id="CHEBI:77138"/>
    </ligand>
</feature>
<feature type="binding site" evidence="1">
    <location>
        <position position="240"/>
    </location>
    <ligand>
        <name>NAD(+)</name>
        <dbReference type="ChEBI" id="CHEBI:57540"/>
    </ligand>
</feature>
<keyword id="KW-0520">NAD</keyword>
<keyword id="KW-0560">Oxidoreductase</keyword>
<keyword id="KW-1185">Reference proteome</keyword>
<reference key="1">
    <citation type="journal article" date="2002" name="Nucleic Acids Res.">
        <title>Genome sequence of Shigella flexneri 2a: insights into pathogenicity through comparison with genomes of Escherichia coli K12 and O157.</title>
        <authorList>
            <person name="Jin Q."/>
            <person name="Yuan Z."/>
            <person name="Xu J."/>
            <person name="Wang Y."/>
            <person name="Shen Y."/>
            <person name="Lu W."/>
            <person name="Wang J."/>
            <person name="Liu H."/>
            <person name="Yang J."/>
            <person name="Yang F."/>
            <person name="Zhang X."/>
            <person name="Zhang J."/>
            <person name="Yang G."/>
            <person name="Wu H."/>
            <person name="Qu D."/>
            <person name="Dong J."/>
            <person name="Sun L."/>
            <person name="Xue Y."/>
            <person name="Zhao A."/>
            <person name="Gao Y."/>
            <person name="Zhu J."/>
            <person name="Kan B."/>
            <person name="Ding K."/>
            <person name="Chen S."/>
            <person name="Cheng H."/>
            <person name="Yao Z."/>
            <person name="He B."/>
            <person name="Chen R."/>
            <person name="Ma D."/>
            <person name="Qiang B."/>
            <person name="Wen Y."/>
            <person name="Hou Y."/>
            <person name="Yu J."/>
        </authorList>
    </citation>
    <scope>NUCLEOTIDE SEQUENCE [LARGE SCALE GENOMIC DNA]</scope>
    <source>
        <strain>301 / Serotype 2a</strain>
    </source>
</reference>
<reference key="2">
    <citation type="journal article" date="2003" name="Infect. Immun.">
        <title>Complete genome sequence and comparative genomics of Shigella flexneri serotype 2a strain 2457T.</title>
        <authorList>
            <person name="Wei J."/>
            <person name="Goldberg M.B."/>
            <person name="Burland V."/>
            <person name="Venkatesan M.M."/>
            <person name="Deng W."/>
            <person name="Fournier G."/>
            <person name="Mayhew G.F."/>
            <person name="Plunkett G. III"/>
            <person name="Rose D.J."/>
            <person name="Darling A."/>
            <person name="Mau B."/>
            <person name="Perna N.T."/>
            <person name="Payne S.M."/>
            <person name="Runyen-Janecky L.J."/>
            <person name="Zhou S."/>
            <person name="Schwartz D.C."/>
            <person name="Blattner F.R."/>
        </authorList>
    </citation>
    <scope>NUCLEOTIDE SEQUENCE [LARGE SCALE GENOMIC DNA]</scope>
    <source>
        <strain>ATCC 700930 / 2457T / Serotype 2a</strain>
    </source>
</reference>
<proteinExistence type="inferred from homology"/>
<evidence type="ECO:0000255" key="1">
    <source>
        <dbReference type="HAMAP-Rule" id="MF_01913"/>
    </source>
</evidence>
<name>SQUU_SHIFL</name>
<organism>
    <name type="scientific">Shigella flexneri</name>
    <dbReference type="NCBI Taxonomy" id="623"/>
    <lineage>
        <taxon>Bacteria</taxon>
        <taxon>Pseudomonadati</taxon>
        <taxon>Pseudomonadota</taxon>
        <taxon>Gammaproteobacteria</taxon>
        <taxon>Enterobacterales</taxon>
        <taxon>Enterobacteriaceae</taxon>
        <taxon>Shigella</taxon>
    </lineage>
</organism>
<sequence>MAAIAFIGLGQMGSPMASNLLQQGHQLRVFDVNAEAVRHLVDKGATPAANPAQAAKDAEFIITMLPNGDLVRNVLFGENGVCEGLSTDALVIDMSTIHPLQTDKLIADMQAKGFSMMDVPVGRTSANAITGTLLLLAGGTAEQVERATPILMAMGSELINAGGPGMGIRVKLINNYMSIALNALSAEAAVLCEALNLPFDVAVKVMSGTAAGKGHFTTSWPNKVLSGDLSPAFMIDLAHKDLGIALDVANQLHVPMPLGAASREVYSQARAAGRGRQDWSAILEQVRVSAGMTAKVKM</sequence>